<accession>P0DTK8</accession>
<sequence length="278" mass="30650">MIVNNTPVETYELNGVPILVKREDLCAPLPGPSFSKIRGVVAHIKNRPETTIGCLDTYHSKAGWAVAYVCQQLGKQAVDYWPRFKRDGAADAPRVQQQHARQLGADLVDIPAGRSAILYHTAKKHLRENYHDSYLMPNALKLPESITENAAEAVRTAPHLPDSGTLVISISSGTVAAGVLKGFEEAGLLRNYNVILHMGYSRSQDATREYIEKAAGLTLGDRIKFIDEGYGYADAARDASAPFPCNPFYDLKAWKWLSNPTNLETILDGPIVFWNIGE</sequence>
<comment type="function">
    <text evidence="1 2">Converts 5-Calpha-glycinylthymidine (Calpha-GlyT) into 5-aminoethyl-2'-deoxyuridine (5-NedU) as a step in the pathway leading to thymidine hypermodifications in the viral genome (PubMed:34522950). As a final result of the pathway of hypermodification, 5-aminoethyl-2'-deoxyuridine (5-NedU) substitutes for about 30% of thymidines in the viral DNA (PubMed:29555775, PubMed:34522950). These modifications probably prevent degradation of viral genome by the host restriction-modification antiviral defense system (PubMed:34522950).</text>
</comment>
<comment type="catalytic activity">
    <reaction evidence="2">
        <text>5-C(alpha)-glycyl-dTMP in DNA + H(+) = 5-aminoethyl-dUMP in DNA + CO2</text>
        <dbReference type="Rhea" id="RHEA:71555"/>
        <dbReference type="Rhea" id="RHEA-COMP:18042"/>
        <dbReference type="Rhea" id="RHEA-COMP:18043"/>
        <dbReference type="ChEBI" id="CHEBI:15378"/>
        <dbReference type="ChEBI" id="CHEBI:16526"/>
        <dbReference type="ChEBI" id="CHEBI:190924"/>
        <dbReference type="ChEBI" id="CHEBI:190925"/>
    </reaction>
</comment>
<comment type="similarity">
    <text evidence="4">Belongs to the pyridoxal-phosphate-dependent aminodecarboxylase family.</text>
</comment>
<keyword id="KW-0210">Decarboxylase</keyword>
<keyword id="KW-0945">Host-virus interaction</keyword>
<keyword id="KW-1090">Inhibition of host innate immune response by virus</keyword>
<keyword id="KW-0456">Lyase</keyword>
<keyword id="KW-1258">Restriction-modification system evasion by virus</keyword>
<keyword id="KW-0899">Viral immunoevasion</keyword>
<organismHost>
    <name type="scientific">Pseudomonas aeruginosa</name>
    <dbReference type="NCBI Taxonomy" id="287"/>
</organismHost>
<proteinExistence type="evidence at protein level"/>
<feature type="chain" id="PRO_0000456277" description="Glycyl-dTMP PLP-dependent decarboxylase">
    <location>
        <begin position="1"/>
        <end position="278"/>
    </location>
</feature>
<evidence type="ECO:0000269" key="1">
    <source>
    </source>
</evidence>
<evidence type="ECO:0000269" key="2">
    <source>
    </source>
</evidence>
<evidence type="ECO:0000303" key="3">
    <source>
    </source>
</evidence>
<evidence type="ECO:0000305" key="4"/>
<dbReference type="EMBL" id="DQ163916">
    <property type="status" value="NOT_ANNOTATED_CDS"/>
    <property type="molecule type" value="Genomic_DNA"/>
</dbReference>
<dbReference type="RefSeq" id="YP_001294560.1">
    <property type="nucleotide sequence ID" value="NC_007809.1"/>
</dbReference>
<dbReference type="SMR" id="P0DTK8"/>
<dbReference type="GeneID" id="5237094"/>
<dbReference type="GO" id="GO:0016831">
    <property type="term" value="F:carboxy-lyase activity"/>
    <property type="evidence" value="ECO:0007669"/>
    <property type="project" value="UniProtKB-KW"/>
</dbReference>
<dbReference type="GO" id="GO:0099018">
    <property type="term" value="P:symbiont-mediated evasion of host restriction-modification system"/>
    <property type="evidence" value="ECO:0007669"/>
    <property type="project" value="UniProtKB-KW"/>
</dbReference>
<dbReference type="GO" id="GO:0052170">
    <property type="term" value="P:symbiont-mediated suppression of host innate immune response"/>
    <property type="evidence" value="ECO:0007669"/>
    <property type="project" value="UniProtKB-KW"/>
</dbReference>
<dbReference type="Gene3D" id="3.40.50.1100">
    <property type="match status" value="2"/>
</dbReference>
<dbReference type="InterPro" id="IPR001926">
    <property type="entry name" value="TrpB-like_PALP"/>
</dbReference>
<dbReference type="InterPro" id="IPR036052">
    <property type="entry name" value="TrpB-like_PALP_sf"/>
</dbReference>
<dbReference type="Pfam" id="PF00291">
    <property type="entry name" value="PALP"/>
    <property type="match status" value="1"/>
</dbReference>
<dbReference type="SUPFAM" id="SSF53686">
    <property type="entry name" value="Tryptophan synthase beta subunit-like PLP-dependent enzymes"/>
    <property type="match status" value="1"/>
</dbReference>
<organism>
    <name type="scientific">Pseudomonas phage M6</name>
    <dbReference type="NCBI Taxonomy" id="2911432"/>
    <lineage>
        <taxon>Viruses</taxon>
        <taxon>Duplodnaviria</taxon>
        <taxon>Heunggongvirae</taxon>
        <taxon>Uroviricota</taxon>
        <taxon>Caudoviricetes</taxon>
        <taxon>Mesyanzhinovviridae</taxon>
        <taxon>Rabinowitzvirinae</taxon>
        <taxon>Yuavirus</taxon>
        <taxon>Pseudomonas virus M6</taxon>
    </lineage>
</organism>
<reference key="1">
    <citation type="journal article" date="2006" name="J. Bacteriol.">
        <title>Comparative genomic analysis of 18 Pseudomonas aeruginosa bacteriophages.</title>
        <authorList>
            <person name="Kwan T."/>
            <person name="Liu J."/>
            <person name="Dubow M."/>
            <person name="Gros P."/>
            <person name="Pelletier J."/>
        </authorList>
    </citation>
    <scope>NUCLEOTIDE SEQUENCE [LARGE SCALE GENOMIC DNA]</scope>
</reference>
<reference key="2">
    <citation type="journal article" date="2018" name="Proc. Natl. Acad. Sci. U.S.A.">
        <title>Identification and biosynthesis of thymidine hypermodifications in the genomic DNA of widespread bacterial viruses.</title>
        <authorList>
            <person name="Lee Y.J."/>
            <person name="Dai N."/>
            <person name="Walsh S.E."/>
            <person name="Mueller S."/>
            <person name="Fraser M.E."/>
            <person name="Kauffman K.M."/>
            <person name="Guan C."/>
            <person name="Correa I.R. Jr."/>
            <person name="Weigele P.R."/>
        </authorList>
    </citation>
    <scope>FUNCTION</scope>
</reference>
<reference key="3">
    <citation type="journal article" date="2021" name="Nucleic Acids Res.">
        <title>Pathways of thymidine hypermodification.</title>
        <authorList>
            <person name="Lee Y.J."/>
            <person name="Dai N."/>
            <person name="Mueller S.I."/>
            <person name="Guan C."/>
            <person name="Parker M.J."/>
            <person name="Fraser M.E."/>
            <person name="Walsh S.E."/>
            <person name="Sridar J."/>
            <person name="Mulholland A."/>
            <person name="Nayak K."/>
            <person name="Sun Z."/>
            <person name="Lin Y.C."/>
            <person name="Comb D.G."/>
            <person name="Marks K."/>
            <person name="Gonzalez R."/>
            <person name="Dowling D.P."/>
            <person name="Bandarian V."/>
            <person name="Saleh L."/>
            <person name="Correa I.R."/>
            <person name="Weigele P.R."/>
        </authorList>
    </citation>
    <scope>FUNCTION</scope>
    <scope>CATALYTIC ACTIVITY</scope>
</reference>
<name>PLP_BPPM6</name>
<protein>
    <recommendedName>
        <fullName evidence="4">Glycyl-dTMP PLP-dependent decarboxylase</fullName>
    </recommendedName>
    <alternativeName>
        <fullName evidence="3">gp52</fullName>
    </alternativeName>
</protein>